<reference key="1">
    <citation type="journal article" date="2009" name="J. Bacteriol.">
        <title>The genome of Thermosipho africanus TCF52B: lateral genetic connections to the Firmicutes and Archaea.</title>
        <authorList>
            <person name="Nesboe C.L."/>
            <person name="Bapteste E."/>
            <person name="Curtis B."/>
            <person name="Dahle H."/>
            <person name="Lopez P."/>
            <person name="Macleod D."/>
            <person name="Dlutek M."/>
            <person name="Bowman S."/>
            <person name="Zhaxybayeva O."/>
            <person name="Birkeland N.-K."/>
            <person name="Doolittle W.F."/>
        </authorList>
    </citation>
    <scope>NUCLEOTIDE SEQUENCE [LARGE SCALE GENOMIC DNA]</scope>
    <source>
        <strain>TCF52B</strain>
    </source>
</reference>
<protein>
    <recommendedName>
        <fullName evidence="1">dTTP/UTP pyrophosphatase</fullName>
        <shortName evidence="1">dTTPase/UTPase</shortName>
        <ecNumber evidence="1">3.6.1.9</ecNumber>
    </recommendedName>
    <alternativeName>
        <fullName evidence="1">Nucleoside triphosphate pyrophosphatase</fullName>
    </alternativeName>
    <alternativeName>
        <fullName evidence="1">Nucleotide pyrophosphatase</fullName>
        <shortName evidence="1">Nucleotide PPase</shortName>
    </alternativeName>
</protein>
<dbReference type="EC" id="3.6.1.9" evidence="1"/>
<dbReference type="EMBL" id="CP001185">
    <property type="protein sequence ID" value="ACJ74939.1"/>
    <property type="molecule type" value="Genomic_DNA"/>
</dbReference>
<dbReference type="RefSeq" id="WP_012579588.1">
    <property type="nucleotide sequence ID" value="NC_011653.1"/>
</dbReference>
<dbReference type="SMR" id="B7IFS5"/>
<dbReference type="STRING" id="484019.THA_448"/>
<dbReference type="KEGG" id="taf:THA_448"/>
<dbReference type="eggNOG" id="COG0424">
    <property type="taxonomic scope" value="Bacteria"/>
</dbReference>
<dbReference type="HOGENOM" id="CLU_040416_0_0_0"/>
<dbReference type="OrthoDB" id="9807767at2"/>
<dbReference type="Proteomes" id="UP000002453">
    <property type="component" value="Chromosome"/>
</dbReference>
<dbReference type="GO" id="GO:0005737">
    <property type="term" value="C:cytoplasm"/>
    <property type="evidence" value="ECO:0007669"/>
    <property type="project" value="UniProtKB-SubCell"/>
</dbReference>
<dbReference type="GO" id="GO:0036218">
    <property type="term" value="F:dTTP diphosphatase activity"/>
    <property type="evidence" value="ECO:0007669"/>
    <property type="project" value="RHEA"/>
</dbReference>
<dbReference type="GO" id="GO:0036221">
    <property type="term" value="F:UTP diphosphatase activity"/>
    <property type="evidence" value="ECO:0007669"/>
    <property type="project" value="RHEA"/>
</dbReference>
<dbReference type="GO" id="GO:0009117">
    <property type="term" value="P:nucleotide metabolic process"/>
    <property type="evidence" value="ECO:0007669"/>
    <property type="project" value="UniProtKB-KW"/>
</dbReference>
<dbReference type="CDD" id="cd00555">
    <property type="entry name" value="Maf"/>
    <property type="match status" value="1"/>
</dbReference>
<dbReference type="Gene3D" id="3.90.950.10">
    <property type="match status" value="1"/>
</dbReference>
<dbReference type="HAMAP" id="MF_00528">
    <property type="entry name" value="Maf"/>
    <property type="match status" value="1"/>
</dbReference>
<dbReference type="InterPro" id="IPR029001">
    <property type="entry name" value="ITPase-like_fam"/>
</dbReference>
<dbReference type="InterPro" id="IPR003697">
    <property type="entry name" value="Maf-like"/>
</dbReference>
<dbReference type="NCBIfam" id="TIGR00172">
    <property type="entry name" value="maf"/>
    <property type="match status" value="1"/>
</dbReference>
<dbReference type="PANTHER" id="PTHR43213">
    <property type="entry name" value="BIFUNCTIONAL DTTP/UTP PYROPHOSPHATASE/METHYLTRANSFERASE PROTEIN-RELATED"/>
    <property type="match status" value="1"/>
</dbReference>
<dbReference type="PANTHER" id="PTHR43213:SF5">
    <property type="entry name" value="BIFUNCTIONAL DTTP_UTP PYROPHOSPHATASE_METHYLTRANSFERASE PROTEIN-RELATED"/>
    <property type="match status" value="1"/>
</dbReference>
<dbReference type="Pfam" id="PF02545">
    <property type="entry name" value="Maf"/>
    <property type="match status" value="1"/>
</dbReference>
<dbReference type="PIRSF" id="PIRSF006305">
    <property type="entry name" value="Maf"/>
    <property type="match status" value="1"/>
</dbReference>
<dbReference type="SUPFAM" id="SSF52972">
    <property type="entry name" value="ITPase-like"/>
    <property type="match status" value="1"/>
</dbReference>
<feature type="chain" id="PRO_1000127797" description="dTTP/UTP pyrophosphatase">
    <location>
        <begin position="1"/>
        <end position="191"/>
    </location>
</feature>
<feature type="active site" description="Proton acceptor" evidence="1">
    <location>
        <position position="64"/>
    </location>
</feature>
<feature type="site" description="Important for substrate specificity" evidence="1">
    <location>
        <position position="11"/>
    </location>
</feature>
<feature type="site" description="Important for substrate specificity" evidence="1">
    <location>
        <position position="65"/>
    </location>
</feature>
<feature type="site" description="Important for substrate specificity" evidence="1">
    <location>
        <position position="147"/>
    </location>
</feature>
<sequence length="191" mass="21615">MKIILASKSPRRIELLKLLKIDFEVIPSNIDENISEKDPKLLAEKLSYLKAMSIKKDGVVLAADTVVTLDKEIFGKPRDYKDAFRMLKSLSGKWHTVITGVTIKFKDEVITFSEKTNVKFKNLSKELIEFYINTAKPFDKAGGYGIQELGSVLVEKIEGDYFNVVGLPISKVWDILWDRGMIDASKGEINK</sequence>
<accession>B7IFS5</accession>
<name>NTPPA_THEAB</name>
<proteinExistence type="inferred from homology"/>
<keyword id="KW-0963">Cytoplasm</keyword>
<keyword id="KW-0378">Hydrolase</keyword>
<keyword id="KW-0546">Nucleotide metabolism</keyword>
<keyword id="KW-1185">Reference proteome</keyword>
<evidence type="ECO:0000255" key="1">
    <source>
        <dbReference type="HAMAP-Rule" id="MF_00528"/>
    </source>
</evidence>
<comment type="function">
    <text evidence="1">Nucleoside triphosphate pyrophosphatase that hydrolyzes dTTP and UTP. May have a dual role in cell division arrest and in preventing the incorporation of modified nucleotides into cellular nucleic acids.</text>
</comment>
<comment type="catalytic activity">
    <reaction evidence="1">
        <text>dTTP + H2O = dTMP + diphosphate + H(+)</text>
        <dbReference type="Rhea" id="RHEA:28534"/>
        <dbReference type="ChEBI" id="CHEBI:15377"/>
        <dbReference type="ChEBI" id="CHEBI:15378"/>
        <dbReference type="ChEBI" id="CHEBI:33019"/>
        <dbReference type="ChEBI" id="CHEBI:37568"/>
        <dbReference type="ChEBI" id="CHEBI:63528"/>
        <dbReference type="EC" id="3.6.1.9"/>
    </reaction>
</comment>
<comment type="catalytic activity">
    <reaction evidence="1">
        <text>UTP + H2O = UMP + diphosphate + H(+)</text>
        <dbReference type="Rhea" id="RHEA:29395"/>
        <dbReference type="ChEBI" id="CHEBI:15377"/>
        <dbReference type="ChEBI" id="CHEBI:15378"/>
        <dbReference type="ChEBI" id="CHEBI:33019"/>
        <dbReference type="ChEBI" id="CHEBI:46398"/>
        <dbReference type="ChEBI" id="CHEBI:57865"/>
        <dbReference type="EC" id="3.6.1.9"/>
    </reaction>
</comment>
<comment type="cofactor">
    <cofactor evidence="1">
        <name>a divalent metal cation</name>
        <dbReference type="ChEBI" id="CHEBI:60240"/>
    </cofactor>
</comment>
<comment type="subcellular location">
    <subcellularLocation>
        <location evidence="1">Cytoplasm</location>
    </subcellularLocation>
</comment>
<comment type="similarity">
    <text evidence="1">Belongs to the Maf family. YhdE subfamily.</text>
</comment>
<gene>
    <name type="ordered locus">THA_448</name>
</gene>
<organism>
    <name type="scientific">Thermosipho africanus (strain TCF52B)</name>
    <dbReference type="NCBI Taxonomy" id="484019"/>
    <lineage>
        <taxon>Bacteria</taxon>
        <taxon>Thermotogati</taxon>
        <taxon>Thermotogota</taxon>
        <taxon>Thermotogae</taxon>
        <taxon>Thermotogales</taxon>
        <taxon>Fervidobacteriaceae</taxon>
        <taxon>Thermosipho</taxon>
    </lineage>
</organism>